<feature type="chain" id="PRO_0000048590" description="MAT+ sexual cell fertilization-promoting factor">
    <location>
        <begin position="1"/>
        <end position="402"/>
    </location>
</feature>
<feature type="DNA-binding region" description="HMG box" evidence="1">
    <location>
        <begin position="169"/>
        <end position="237"/>
    </location>
</feature>
<feature type="region of interest" description="Disordered" evidence="2">
    <location>
        <begin position="246"/>
        <end position="272"/>
    </location>
</feature>
<dbReference type="EMBL" id="X64195">
    <property type="protein sequence ID" value="CAA45520.1"/>
    <property type="molecule type" value="Genomic_DNA"/>
</dbReference>
<dbReference type="PIR" id="S22449">
    <property type="entry name" value="S22449"/>
</dbReference>
<dbReference type="SMR" id="P35693"/>
<dbReference type="VEuPathDB" id="FungiDB:PODANS_1_20590"/>
<dbReference type="GO" id="GO:0005634">
    <property type="term" value="C:nucleus"/>
    <property type="evidence" value="ECO:0007669"/>
    <property type="project" value="UniProtKB-SubCell"/>
</dbReference>
<dbReference type="GO" id="GO:0001228">
    <property type="term" value="F:DNA-binding transcription activator activity, RNA polymerase II-specific"/>
    <property type="evidence" value="ECO:0007669"/>
    <property type="project" value="TreeGrafter"/>
</dbReference>
<dbReference type="GO" id="GO:0000978">
    <property type="term" value="F:RNA polymerase II cis-regulatory region sequence-specific DNA binding"/>
    <property type="evidence" value="ECO:0007669"/>
    <property type="project" value="TreeGrafter"/>
</dbReference>
<dbReference type="GO" id="GO:0030154">
    <property type="term" value="P:cell differentiation"/>
    <property type="evidence" value="ECO:0007669"/>
    <property type="project" value="TreeGrafter"/>
</dbReference>
<dbReference type="GO" id="GO:0007338">
    <property type="term" value="P:single fertilization"/>
    <property type="evidence" value="ECO:0007669"/>
    <property type="project" value="UniProtKB-KW"/>
</dbReference>
<dbReference type="CDD" id="cd01389">
    <property type="entry name" value="HMG-box_ROX1-like"/>
    <property type="match status" value="1"/>
</dbReference>
<dbReference type="Gene3D" id="1.10.30.10">
    <property type="entry name" value="High mobility group box domain"/>
    <property type="match status" value="1"/>
</dbReference>
<dbReference type="InterPro" id="IPR009071">
    <property type="entry name" value="HMG_box_dom"/>
</dbReference>
<dbReference type="InterPro" id="IPR036910">
    <property type="entry name" value="HMG_box_dom_sf"/>
</dbReference>
<dbReference type="InterPro" id="IPR050140">
    <property type="entry name" value="SRY-related_HMG-box_TF-like"/>
</dbReference>
<dbReference type="PANTHER" id="PTHR10270:SF161">
    <property type="entry name" value="SEX-DETERMINING REGION Y PROTEIN"/>
    <property type="match status" value="1"/>
</dbReference>
<dbReference type="PANTHER" id="PTHR10270">
    <property type="entry name" value="SOX TRANSCRIPTION FACTOR"/>
    <property type="match status" value="1"/>
</dbReference>
<dbReference type="Pfam" id="PF00505">
    <property type="entry name" value="HMG_box"/>
    <property type="match status" value="1"/>
</dbReference>
<dbReference type="SMART" id="SM00398">
    <property type="entry name" value="HMG"/>
    <property type="match status" value="1"/>
</dbReference>
<dbReference type="SUPFAM" id="SSF47095">
    <property type="entry name" value="HMG-box"/>
    <property type="match status" value="1"/>
</dbReference>
<dbReference type="PROSITE" id="PS50118">
    <property type="entry name" value="HMG_BOX_2"/>
    <property type="match status" value="1"/>
</dbReference>
<comment type="function">
    <text>Controls fertilization, probably by determining the mating type.</text>
</comment>
<comment type="subcellular location">
    <subcellularLocation>
        <location evidence="1">Nucleus</location>
    </subcellularLocation>
</comment>
<gene>
    <name type="primary">FPR1</name>
</gene>
<protein>
    <recommendedName>
        <fullName>MAT+ sexual cell fertilization-promoting factor</fullName>
    </recommendedName>
</protein>
<accession>P35693</accession>
<keyword id="KW-0238">DNA-binding</keyword>
<keyword id="KW-0278">Fertilization</keyword>
<keyword id="KW-0539">Nucleus</keyword>
<keyword id="KW-0804">Transcription</keyword>
<keyword id="KW-0805">Transcription regulation</keyword>
<evidence type="ECO:0000255" key="1">
    <source>
        <dbReference type="PROSITE-ProRule" id="PRU00267"/>
    </source>
</evidence>
<evidence type="ECO:0000256" key="2">
    <source>
        <dbReference type="SAM" id="MobiDB-lite"/>
    </source>
</evidence>
<reference key="1">
    <citation type="journal article" date="1992" name="Mol. Gen. Genet.">
        <title>The mating types of Podospora anserina: functional analysis and sequence of the fertilization domains.</title>
        <authorList>
            <person name="Debuchy R."/>
            <person name="Coppin E."/>
        </authorList>
    </citation>
    <scope>NUCLEOTIDE SEQUENCE [GENOMIC DNA]</scope>
</reference>
<reference key="2">
    <citation type="submission" date="1996-11" db="EMBL/GenBank/DDBJ databases">
        <authorList>
            <person name="Debuchy R."/>
            <person name="Coppin E."/>
        </authorList>
    </citation>
    <scope>SEQUENCE REVISION</scope>
</reference>
<proteinExistence type="inferred from homology"/>
<name>FPR1_PODAS</name>
<sequence>MAAFNFEAFSLTPQGSTISAAPRPAAPAIDRTVQQQCGSFGYGNRAFQFDFASLESLPEDANPGLTEVLTAKYWNHFSIQLGHWNTLKVIVLDAQMFSIMPDHTKKGVLNTMKSYLGGADAMYARDADNGQVVILAPRRLMESNITIVGSTTVWDPKKRHVQATAEAKIPRPPNAYILYRKDQQAALKAANPGIPNNDISVMTGGMWKKESPEVRAEYQRRASEIKAKLMSAHPHYRYVPRRSSEIRRRAPRRNRAQEVANASPIGENSGAPIVGNPIVTTMEQQQPLPDISIAPNQEITKDNDVSHLIDPPHVFSGQITELMPDVANFLPPMIREGWSPLHDFRAVLNGHTGNNGVDCALTPESESQDDFVGTPSSTMPDNSAFDWITGTEEDLAQIFGQF</sequence>
<organism>
    <name type="scientific">Podospora anserina</name>
    <name type="common">Pleurage anserina</name>
    <dbReference type="NCBI Taxonomy" id="2587412"/>
    <lineage>
        <taxon>Eukaryota</taxon>
        <taxon>Fungi</taxon>
        <taxon>Dikarya</taxon>
        <taxon>Ascomycota</taxon>
        <taxon>Pezizomycotina</taxon>
        <taxon>Sordariomycetes</taxon>
        <taxon>Sordariomycetidae</taxon>
        <taxon>Sordariales</taxon>
        <taxon>Podosporaceae</taxon>
        <taxon>Podospora</taxon>
    </lineage>
</organism>